<proteinExistence type="inferred from homology"/>
<accession>Q7WLK7</accession>
<evidence type="ECO:0000255" key="1">
    <source>
        <dbReference type="HAMAP-Rule" id="MF_01161"/>
    </source>
</evidence>
<dbReference type="EC" id="6.3.4.19" evidence="1"/>
<dbReference type="EMBL" id="BX640442">
    <property type="protein sequence ID" value="CAE32235.1"/>
    <property type="molecule type" value="Genomic_DNA"/>
</dbReference>
<dbReference type="SMR" id="Q7WLK7"/>
<dbReference type="KEGG" id="bbr:BB1738"/>
<dbReference type="eggNOG" id="COG0037">
    <property type="taxonomic scope" value="Bacteria"/>
</dbReference>
<dbReference type="HOGENOM" id="CLU_018869_2_1_4"/>
<dbReference type="Proteomes" id="UP000001027">
    <property type="component" value="Chromosome"/>
</dbReference>
<dbReference type="GO" id="GO:0005737">
    <property type="term" value="C:cytoplasm"/>
    <property type="evidence" value="ECO:0007669"/>
    <property type="project" value="UniProtKB-SubCell"/>
</dbReference>
<dbReference type="GO" id="GO:0005524">
    <property type="term" value="F:ATP binding"/>
    <property type="evidence" value="ECO:0007669"/>
    <property type="project" value="UniProtKB-UniRule"/>
</dbReference>
<dbReference type="GO" id="GO:0032267">
    <property type="term" value="F:tRNA(Ile)-lysidine synthase activity"/>
    <property type="evidence" value="ECO:0007669"/>
    <property type="project" value="UniProtKB-EC"/>
</dbReference>
<dbReference type="GO" id="GO:0006400">
    <property type="term" value="P:tRNA modification"/>
    <property type="evidence" value="ECO:0007669"/>
    <property type="project" value="UniProtKB-UniRule"/>
</dbReference>
<dbReference type="CDD" id="cd01992">
    <property type="entry name" value="TilS_N"/>
    <property type="match status" value="1"/>
</dbReference>
<dbReference type="Gene3D" id="1.20.59.20">
    <property type="match status" value="1"/>
</dbReference>
<dbReference type="Gene3D" id="3.40.50.620">
    <property type="entry name" value="HUPs"/>
    <property type="match status" value="1"/>
</dbReference>
<dbReference type="HAMAP" id="MF_01161">
    <property type="entry name" value="tRNA_Ile_lys_synt"/>
    <property type="match status" value="1"/>
</dbReference>
<dbReference type="InterPro" id="IPR014729">
    <property type="entry name" value="Rossmann-like_a/b/a_fold"/>
</dbReference>
<dbReference type="InterPro" id="IPR011063">
    <property type="entry name" value="TilS/TtcA_N"/>
</dbReference>
<dbReference type="InterPro" id="IPR012094">
    <property type="entry name" value="tRNA_Ile_lys_synt"/>
</dbReference>
<dbReference type="InterPro" id="IPR012795">
    <property type="entry name" value="tRNA_Ile_lys_synt_N"/>
</dbReference>
<dbReference type="InterPro" id="IPR015262">
    <property type="entry name" value="tRNA_Ile_lys_synt_subst-bd"/>
</dbReference>
<dbReference type="NCBIfam" id="TIGR02432">
    <property type="entry name" value="lysidine_TilS_N"/>
    <property type="match status" value="1"/>
</dbReference>
<dbReference type="PANTHER" id="PTHR43033">
    <property type="entry name" value="TRNA(ILE)-LYSIDINE SYNTHASE-RELATED"/>
    <property type="match status" value="1"/>
</dbReference>
<dbReference type="PANTHER" id="PTHR43033:SF1">
    <property type="entry name" value="TRNA(ILE)-LYSIDINE SYNTHASE-RELATED"/>
    <property type="match status" value="1"/>
</dbReference>
<dbReference type="Pfam" id="PF01171">
    <property type="entry name" value="ATP_bind_3"/>
    <property type="match status" value="1"/>
</dbReference>
<dbReference type="Pfam" id="PF09179">
    <property type="entry name" value="TilS"/>
    <property type="match status" value="1"/>
</dbReference>
<dbReference type="SUPFAM" id="SSF52402">
    <property type="entry name" value="Adenine nucleotide alpha hydrolases-like"/>
    <property type="match status" value="1"/>
</dbReference>
<dbReference type="SUPFAM" id="SSF82829">
    <property type="entry name" value="MesJ substrate recognition domain-like"/>
    <property type="match status" value="1"/>
</dbReference>
<protein>
    <recommendedName>
        <fullName evidence="1">tRNA(Ile)-lysidine synthase</fullName>
        <ecNumber evidence="1">6.3.4.19</ecNumber>
    </recommendedName>
    <alternativeName>
        <fullName evidence="1">tRNA(Ile)-2-lysyl-cytidine synthase</fullName>
    </alternativeName>
    <alternativeName>
        <fullName evidence="1">tRNA(Ile)-lysidine synthetase</fullName>
    </alternativeName>
</protein>
<organism>
    <name type="scientific">Bordetella bronchiseptica (strain ATCC BAA-588 / NCTC 13252 / RB50)</name>
    <name type="common">Alcaligenes bronchisepticus</name>
    <dbReference type="NCBI Taxonomy" id="257310"/>
    <lineage>
        <taxon>Bacteria</taxon>
        <taxon>Pseudomonadati</taxon>
        <taxon>Pseudomonadota</taxon>
        <taxon>Betaproteobacteria</taxon>
        <taxon>Burkholderiales</taxon>
        <taxon>Alcaligenaceae</taxon>
        <taxon>Bordetella</taxon>
    </lineage>
</organism>
<name>TILS_BORBR</name>
<sequence length="344" mass="36766">MSTSTAAPAPSLSDLCPAALRRPVAAALRALDPAPARLAVAVSGGADSAMLAVAAAAALPPGCTLRLFHVHHGLQAAADQWAAQVRGLGALLGVPVDEARVTVPPGQGLGMEAAARLARYQALAGLARQHGVRHILLAHHRNDQAETVLLRLLRGTGLQGMAAMAPLSERDGVAYLRPWLDVDRAAILALAGAVRAQCGWQAVQDPTNTDPRYARAAVRTQLAPALDARWPGWQAIVARHARQMAEAAEIVAEVARADFDTLEPADAGRSFSLAAWRGLSAARQAQALRHWLASQDAPMPTEARLAELQRQLRQLHALGHDRHLRWQHAGRVVRCERGRVWIDD</sequence>
<keyword id="KW-0067">ATP-binding</keyword>
<keyword id="KW-0963">Cytoplasm</keyword>
<keyword id="KW-0436">Ligase</keyword>
<keyword id="KW-0547">Nucleotide-binding</keyword>
<keyword id="KW-0819">tRNA processing</keyword>
<feature type="chain" id="PRO_0000181656" description="tRNA(Ile)-lysidine synthase">
    <location>
        <begin position="1"/>
        <end position="344"/>
    </location>
</feature>
<feature type="binding site" evidence="1">
    <location>
        <begin position="43"/>
        <end position="48"/>
    </location>
    <ligand>
        <name>ATP</name>
        <dbReference type="ChEBI" id="CHEBI:30616"/>
    </ligand>
</feature>
<gene>
    <name evidence="1" type="primary">tilS</name>
    <name type="ordered locus">BB1738</name>
</gene>
<comment type="function">
    <text evidence="1">Ligates lysine onto the cytidine present at position 34 of the AUA codon-specific tRNA(Ile) that contains the anticodon CAU, in an ATP-dependent manner. Cytidine is converted to lysidine, thus changing the amino acid specificity of the tRNA from methionine to isoleucine.</text>
</comment>
<comment type="catalytic activity">
    <reaction evidence="1">
        <text>cytidine(34) in tRNA(Ile2) + L-lysine + ATP = lysidine(34) in tRNA(Ile2) + AMP + diphosphate + H(+)</text>
        <dbReference type="Rhea" id="RHEA:43744"/>
        <dbReference type="Rhea" id="RHEA-COMP:10625"/>
        <dbReference type="Rhea" id="RHEA-COMP:10670"/>
        <dbReference type="ChEBI" id="CHEBI:15378"/>
        <dbReference type="ChEBI" id="CHEBI:30616"/>
        <dbReference type="ChEBI" id="CHEBI:32551"/>
        <dbReference type="ChEBI" id="CHEBI:33019"/>
        <dbReference type="ChEBI" id="CHEBI:82748"/>
        <dbReference type="ChEBI" id="CHEBI:83665"/>
        <dbReference type="ChEBI" id="CHEBI:456215"/>
        <dbReference type="EC" id="6.3.4.19"/>
    </reaction>
</comment>
<comment type="subcellular location">
    <subcellularLocation>
        <location evidence="1">Cytoplasm</location>
    </subcellularLocation>
</comment>
<comment type="domain">
    <text>The N-terminal region contains the highly conserved SGGXDS motif, predicted to be a P-loop motif involved in ATP binding.</text>
</comment>
<comment type="similarity">
    <text evidence="1">Belongs to the tRNA(Ile)-lysidine synthase family.</text>
</comment>
<reference key="1">
    <citation type="journal article" date="2003" name="Nat. Genet.">
        <title>Comparative analysis of the genome sequences of Bordetella pertussis, Bordetella parapertussis and Bordetella bronchiseptica.</title>
        <authorList>
            <person name="Parkhill J."/>
            <person name="Sebaihia M."/>
            <person name="Preston A."/>
            <person name="Murphy L.D."/>
            <person name="Thomson N.R."/>
            <person name="Harris D.E."/>
            <person name="Holden M.T.G."/>
            <person name="Churcher C.M."/>
            <person name="Bentley S.D."/>
            <person name="Mungall K.L."/>
            <person name="Cerdeno-Tarraga A.-M."/>
            <person name="Temple L."/>
            <person name="James K.D."/>
            <person name="Harris B."/>
            <person name="Quail M.A."/>
            <person name="Achtman M."/>
            <person name="Atkin R."/>
            <person name="Baker S."/>
            <person name="Basham D."/>
            <person name="Bason N."/>
            <person name="Cherevach I."/>
            <person name="Chillingworth T."/>
            <person name="Collins M."/>
            <person name="Cronin A."/>
            <person name="Davis P."/>
            <person name="Doggett J."/>
            <person name="Feltwell T."/>
            <person name="Goble A."/>
            <person name="Hamlin N."/>
            <person name="Hauser H."/>
            <person name="Holroyd S."/>
            <person name="Jagels K."/>
            <person name="Leather S."/>
            <person name="Moule S."/>
            <person name="Norberczak H."/>
            <person name="O'Neil S."/>
            <person name="Ormond D."/>
            <person name="Price C."/>
            <person name="Rabbinowitsch E."/>
            <person name="Rutter S."/>
            <person name="Sanders M."/>
            <person name="Saunders D."/>
            <person name="Seeger K."/>
            <person name="Sharp S."/>
            <person name="Simmonds M."/>
            <person name="Skelton J."/>
            <person name="Squares R."/>
            <person name="Squares S."/>
            <person name="Stevens K."/>
            <person name="Unwin L."/>
            <person name="Whitehead S."/>
            <person name="Barrell B.G."/>
            <person name="Maskell D.J."/>
        </authorList>
    </citation>
    <scope>NUCLEOTIDE SEQUENCE [LARGE SCALE GENOMIC DNA]</scope>
    <source>
        <strain>ATCC BAA-588 / NCTC 13252 / RB50</strain>
    </source>
</reference>